<evidence type="ECO:0000250" key="1"/>
<evidence type="ECO:0000250" key="2">
    <source>
        <dbReference type="UniProtKB" id="Q9BVM4"/>
    </source>
</evidence>
<evidence type="ECO:0000256" key="3">
    <source>
        <dbReference type="SAM" id="MobiDB-lite"/>
    </source>
</evidence>
<evidence type="ECO:0000305" key="4"/>
<feature type="chain" id="PRO_0000320202" description="Gamma-glutamylaminecyclotransferase">
    <location>
        <begin position="1"/>
        <end position="168"/>
    </location>
</feature>
<feature type="region of interest" description="Disordered" evidence="3">
    <location>
        <begin position="1"/>
        <end position="20"/>
    </location>
</feature>
<feature type="active site" description="Proton acceptor" evidence="1">
    <location>
        <position position="107"/>
    </location>
</feature>
<feature type="binding site" evidence="1">
    <location>
        <begin position="32"/>
        <end position="35"/>
    </location>
    <ligand>
        <name>substrate</name>
    </ligand>
</feature>
<protein>
    <recommendedName>
        <fullName>Gamma-glutamylaminecyclotransferase</fullName>
        <shortName>GGACT</shortName>
        <ecNumber evidence="2">4.3.2.8</ecNumber>
    </recommendedName>
    <alternativeName>
        <fullName>AIG2-like domain-containing protein 1</fullName>
    </alternativeName>
    <alternativeName>
        <fullName>Gamma-glutamylamine cyclotransferase</fullName>
    </alternativeName>
</protein>
<proteinExistence type="evidence at transcript level"/>
<organism>
    <name type="scientific">Bos taurus</name>
    <name type="common">Bovine</name>
    <dbReference type="NCBI Taxonomy" id="9913"/>
    <lineage>
        <taxon>Eukaryota</taxon>
        <taxon>Metazoa</taxon>
        <taxon>Chordata</taxon>
        <taxon>Craniata</taxon>
        <taxon>Vertebrata</taxon>
        <taxon>Euteleostomi</taxon>
        <taxon>Mammalia</taxon>
        <taxon>Eutheria</taxon>
        <taxon>Laurasiatheria</taxon>
        <taxon>Artiodactyla</taxon>
        <taxon>Ruminantia</taxon>
        <taxon>Pecora</taxon>
        <taxon>Bovidae</taxon>
        <taxon>Bovinae</taxon>
        <taxon>Bos</taxon>
    </lineage>
</organism>
<name>GGACT_BOVIN</name>
<comment type="function">
    <text evidence="2">Contributes to degradation of proteins cross-linked by transglutaminases by degrading the cross-link between a lysine and a glutamic acid residue. Catalyzes the formation of 5-oxo-L-proline from L-gamma-glutamyl-L-epsilon-lysine. Inactive with L-gamma-glutamyl-alpha-amino acid substrates such as L-gamma-glutamyl-L-alpha-cysteine and L-gamma-glutamyl-L-alpha-alanine.</text>
</comment>
<comment type="catalytic activity">
    <reaction evidence="2">
        <text>epsilon-(gamma-L-glutamyl)-L-lysine = 5-oxo-L-proline + L-lysine</text>
        <dbReference type="Rhea" id="RHEA:16961"/>
        <dbReference type="ChEBI" id="CHEBI:32551"/>
        <dbReference type="ChEBI" id="CHEBI:58402"/>
        <dbReference type="ChEBI" id="CHEBI:133752"/>
        <dbReference type="EC" id="4.3.2.8"/>
    </reaction>
</comment>
<comment type="subunit">
    <text evidence="2">Monomer.</text>
</comment>
<comment type="similarity">
    <text evidence="4">Belongs to the gamma-glutamylcyclotransferase family.</text>
</comment>
<reference key="1">
    <citation type="submission" date="2006-06" db="EMBL/GenBank/DDBJ databases">
        <authorList>
            <consortium name="NIH - Mammalian Gene Collection (MGC) project"/>
        </authorList>
    </citation>
    <scope>NUCLEOTIDE SEQUENCE [LARGE SCALE MRNA]</scope>
    <source>
        <strain>Hereford</strain>
        <tissue>Fetal muscle</tissue>
    </source>
</reference>
<dbReference type="EC" id="4.3.2.8" evidence="2"/>
<dbReference type="EMBL" id="BC118322">
    <property type="protein sequence ID" value="AAI18323.1"/>
    <property type="molecule type" value="mRNA"/>
</dbReference>
<dbReference type="RefSeq" id="NP_001069039.1">
    <property type="nucleotide sequence ID" value="NM_001075571.1"/>
</dbReference>
<dbReference type="RefSeq" id="XP_024855613.1">
    <property type="nucleotide sequence ID" value="XM_024999845.2"/>
</dbReference>
<dbReference type="RefSeq" id="XP_024855614.1">
    <property type="nucleotide sequence ID" value="XM_024999846.2"/>
</dbReference>
<dbReference type="RefSeq" id="XP_024855615.1">
    <property type="nucleotide sequence ID" value="XM_024999847.2"/>
</dbReference>
<dbReference type="RefSeq" id="XP_024855616.1">
    <property type="nucleotide sequence ID" value="XM_024999848.2"/>
</dbReference>
<dbReference type="RefSeq" id="XP_024855617.1">
    <property type="nucleotide sequence ID" value="XM_024999849.2"/>
</dbReference>
<dbReference type="RefSeq" id="XP_024855618.1">
    <property type="nucleotide sequence ID" value="XM_024999850.2"/>
</dbReference>
<dbReference type="RefSeq" id="XP_059748004.1">
    <property type="nucleotide sequence ID" value="XM_059892021.1"/>
</dbReference>
<dbReference type="RefSeq" id="XP_059748005.1">
    <property type="nucleotide sequence ID" value="XM_059892022.1"/>
</dbReference>
<dbReference type="RefSeq" id="XP_059748006.1">
    <property type="nucleotide sequence ID" value="XM_059892023.1"/>
</dbReference>
<dbReference type="RefSeq" id="XP_059748007.1">
    <property type="nucleotide sequence ID" value="XM_059892024.1"/>
</dbReference>
<dbReference type="SMR" id="Q0VFX9"/>
<dbReference type="FunCoup" id="Q0VFX9">
    <property type="interactions" value="156"/>
</dbReference>
<dbReference type="STRING" id="9913.ENSBTAP00000055673"/>
<dbReference type="PaxDb" id="9913-ENSBTAP00000055673"/>
<dbReference type="GeneID" id="512596"/>
<dbReference type="KEGG" id="bta:512596"/>
<dbReference type="CTD" id="87769"/>
<dbReference type="VEuPathDB" id="HostDB:ENSBTAG00000046552"/>
<dbReference type="eggNOG" id="KOG4450">
    <property type="taxonomic scope" value="Eukaryota"/>
</dbReference>
<dbReference type="HOGENOM" id="CLU_083466_1_0_1"/>
<dbReference type="InParanoid" id="Q0VFX9"/>
<dbReference type="OrthoDB" id="113620at2759"/>
<dbReference type="TreeFam" id="TF323258"/>
<dbReference type="BRENDA" id="4.3.2.8">
    <property type="organism ID" value="908"/>
</dbReference>
<dbReference type="Proteomes" id="UP000009136">
    <property type="component" value="Chromosome 12"/>
</dbReference>
<dbReference type="Bgee" id="ENSBTAG00000046552">
    <property type="expression patterns" value="Expressed in cortex of kidney and 104 other cell types or tissues"/>
</dbReference>
<dbReference type="GO" id="GO:0005829">
    <property type="term" value="C:cytosol"/>
    <property type="evidence" value="ECO:0000318"/>
    <property type="project" value="GO_Central"/>
</dbReference>
<dbReference type="GO" id="GO:0061929">
    <property type="term" value="F:gamma-glutamylaminecyclotransferase activity"/>
    <property type="evidence" value="ECO:0000250"/>
    <property type="project" value="UniProtKB"/>
</dbReference>
<dbReference type="GO" id="GO:0042219">
    <property type="term" value="P:modified amino acid catabolic process"/>
    <property type="evidence" value="ECO:0000250"/>
    <property type="project" value="UniProtKB"/>
</dbReference>
<dbReference type="CDD" id="cd06661">
    <property type="entry name" value="GGCT_like"/>
    <property type="match status" value="1"/>
</dbReference>
<dbReference type="FunFam" id="3.10.490.10:FF:000008">
    <property type="entry name" value="Gamma-glutamylaminecyclotransferase A"/>
    <property type="match status" value="1"/>
</dbReference>
<dbReference type="Gene3D" id="3.10.490.10">
    <property type="entry name" value="Gamma-glutamyl cyclotransferase-like"/>
    <property type="match status" value="1"/>
</dbReference>
<dbReference type="InterPro" id="IPR009288">
    <property type="entry name" value="AIG2-like_dom"/>
</dbReference>
<dbReference type="InterPro" id="IPR039126">
    <property type="entry name" value="GGACT"/>
</dbReference>
<dbReference type="InterPro" id="IPR013024">
    <property type="entry name" value="GGCT-like"/>
</dbReference>
<dbReference type="InterPro" id="IPR036568">
    <property type="entry name" value="GGCT-like_sf"/>
</dbReference>
<dbReference type="PANTHER" id="PTHR12510:SF4">
    <property type="entry name" value="GAMMA-GLUTAMYLAMINECYCLOTRANSFERASE"/>
    <property type="match status" value="1"/>
</dbReference>
<dbReference type="PANTHER" id="PTHR12510">
    <property type="entry name" value="TROPONIN C-AKIN-1 PROTEIN"/>
    <property type="match status" value="1"/>
</dbReference>
<dbReference type="Pfam" id="PF06094">
    <property type="entry name" value="GGACT"/>
    <property type="match status" value="1"/>
</dbReference>
<dbReference type="SUPFAM" id="SSF110857">
    <property type="entry name" value="Gamma-glutamyl cyclotransferase-like"/>
    <property type="match status" value="1"/>
</dbReference>
<keyword id="KW-0456">Lyase</keyword>
<keyword id="KW-1185">Reference proteome</keyword>
<accession>Q0VFX9</accession>
<gene>
    <name type="primary">GGACT</name>
    <name type="synonym">A2LD1</name>
</gene>
<sequence length="168" mass="19052">MPGPECKWSTTETGAPCGTDDSSGRLAPVFVYGTLKTGQPNHRVLLDGAHGRAAFRGRAHTLEPYPLVIAGEHNIPRLLNLPGRGHRVFGEVYEVDERMLRFLDEFESCPDMYQRTRLHVALEGVRGPLECFVYTTATYPPEWVHLPYLDDYDSQGKHGLRYNPRENR</sequence>